<reference key="1">
    <citation type="submission" date="2008-05" db="EMBL/GenBank/DDBJ databases">
        <title>Complete sequence of Chlorobium limicola DSM 245.</title>
        <authorList>
            <consortium name="US DOE Joint Genome Institute"/>
            <person name="Lucas S."/>
            <person name="Copeland A."/>
            <person name="Lapidus A."/>
            <person name="Glavina del Rio T."/>
            <person name="Dalin E."/>
            <person name="Tice H."/>
            <person name="Bruce D."/>
            <person name="Goodwin L."/>
            <person name="Pitluck S."/>
            <person name="Schmutz J."/>
            <person name="Larimer F."/>
            <person name="Land M."/>
            <person name="Hauser L."/>
            <person name="Kyrpides N."/>
            <person name="Ovchinnikova G."/>
            <person name="Zhao F."/>
            <person name="Li T."/>
            <person name="Liu Z."/>
            <person name="Overmann J."/>
            <person name="Bryant D.A."/>
            <person name="Richardson P."/>
        </authorList>
    </citation>
    <scope>NUCLEOTIDE SEQUENCE [LARGE SCALE GENOMIC DNA]</scope>
    <source>
        <strain>DSM 245 / NBRC 103803 / 6330</strain>
    </source>
</reference>
<accession>B3EGX2</accession>
<feature type="chain" id="PRO_1000144660" description="Large ribosomal subunit protein uL30">
    <location>
        <begin position="1"/>
        <end position="61"/>
    </location>
</feature>
<organism>
    <name type="scientific">Chlorobium limicola (strain DSM 245 / NBRC 103803 / 6330)</name>
    <dbReference type="NCBI Taxonomy" id="290315"/>
    <lineage>
        <taxon>Bacteria</taxon>
        <taxon>Pseudomonadati</taxon>
        <taxon>Chlorobiota</taxon>
        <taxon>Chlorobiia</taxon>
        <taxon>Chlorobiales</taxon>
        <taxon>Chlorobiaceae</taxon>
        <taxon>Chlorobium/Pelodictyon group</taxon>
        <taxon>Chlorobium</taxon>
    </lineage>
</organism>
<sequence length="61" mass="6929">MSDKTIRIIQVRSVIGCTKKQKATIKALGLGRPNYQVEKQDNPCLRGQIRVVQHLVKVEEL</sequence>
<evidence type="ECO:0000255" key="1">
    <source>
        <dbReference type="HAMAP-Rule" id="MF_01371"/>
    </source>
</evidence>
<evidence type="ECO:0000305" key="2"/>
<comment type="subunit">
    <text evidence="1">Part of the 50S ribosomal subunit.</text>
</comment>
<comment type="similarity">
    <text evidence="1">Belongs to the universal ribosomal protein uL30 family.</text>
</comment>
<dbReference type="EMBL" id="CP001097">
    <property type="protein sequence ID" value="ACD91235.1"/>
    <property type="molecule type" value="Genomic_DNA"/>
</dbReference>
<dbReference type="RefSeq" id="WP_012467102.1">
    <property type="nucleotide sequence ID" value="NC_010803.1"/>
</dbReference>
<dbReference type="SMR" id="B3EGX2"/>
<dbReference type="STRING" id="290315.Clim_2211"/>
<dbReference type="KEGG" id="cli:Clim_2211"/>
<dbReference type="eggNOG" id="COG1841">
    <property type="taxonomic scope" value="Bacteria"/>
</dbReference>
<dbReference type="HOGENOM" id="CLU_131047_2_0_10"/>
<dbReference type="OrthoDB" id="9812790at2"/>
<dbReference type="Proteomes" id="UP000008841">
    <property type="component" value="Chromosome"/>
</dbReference>
<dbReference type="GO" id="GO:0022625">
    <property type="term" value="C:cytosolic large ribosomal subunit"/>
    <property type="evidence" value="ECO:0007669"/>
    <property type="project" value="TreeGrafter"/>
</dbReference>
<dbReference type="GO" id="GO:0003735">
    <property type="term" value="F:structural constituent of ribosome"/>
    <property type="evidence" value="ECO:0007669"/>
    <property type="project" value="InterPro"/>
</dbReference>
<dbReference type="GO" id="GO:0006412">
    <property type="term" value="P:translation"/>
    <property type="evidence" value="ECO:0007669"/>
    <property type="project" value="UniProtKB-UniRule"/>
</dbReference>
<dbReference type="CDD" id="cd01658">
    <property type="entry name" value="Ribosomal_L30"/>
    <property type="match status" value="1"/>
</dbReference>
<dbReference type="Gene3D" id="3.30.1390.20">
    <property type="entry name" value="Ribosomal protein L30, ferredoxin-like fold domain"/>
    <property type="match status" value="1"/>
</dbReference>
<dbReference type="HAMAP" id="MF_01371_B">
    <property type="entry name" value="Ribosomal_uL30_B"/>
    <property type="match status" value="1"/>
</dbReference>
<dbReference type="InterPro" id="IPR036919">
    <property type="entry name" value="Ribo_uL30_ferredoxin-like_sf"/>
</dbReference>
<dbReference type="InterPro" id="IPR005996">
    <property type="entry name" value="Ribosomal_uL30_bac-type"/>
</dbReference>
<dbReference type="InterPro" id="IPR016082">
    <property type="entry name" value="Ribosomal_uL30_ferredoxin-like"/>
</dbReference>
<dbReference type="NCBIfam" id="TIGR01308">
    <property type="entry name" value="rpmD_bact"/>
    <property type="match status" value="1"/>
</dbReference>
<dbReference type="PANTHER" id="PTHR15892:SF2">
    <property type="entry name" value="LARGE RIBOSOMAL SUBUNIT PROTEIN UL30M"/>
    <property type="match status" value="1"/>
</dbReference>
<dbReference type="PANTHER" id="PTHR15892">
    <property type="entry name" value="MITOCHONDRIAL RIBOSOMAL PROTEIN L30"/>
    <property type="match status" value="1"/>
</dbReference>
<dbReference type="Pfam" id="PF00327">
    <property type="entry name" value="Ribosomal_L30"/>
    <property type="match status" value="1"/>
</dbReference>
<dbReference type="PIRSF" id="PIRSF002211">
    <property type="entry name" value="Ribosomal_L30_bac-type"/>
    <property type="match status" value="1"/>
</dbReference>
<dbReference type="SUPFAM" id="SSF55129">
    <property type="entry name" value="Ribosomal protein L30p/L7e"/>
    <property type="match status" value="1"/>
</dbReference>
<proteinExistence type="inferred from homology"/>
<name>RL30_CHLL2</name>
<gene>
    <name evidence="1" type="primary">rpmD</name>
    <name type="ordered locus">Clim_2211</name>
</gene>
<protein>
    <recommendedName>
        <fullName evidence="1">Large ribosomal subunit protein uL30</fullName>
    </recommendedName>
    <alternativeName>
        <fullName evidence="2">50S ribosomal protein L30</fullName>
    </alternativeName>
</protein>
<keyword id="KW-0687">Ribonucleoprotein</keyword>
<keyword id="KW-0689">Ribosomal protein</keyword>